<dbReference type="EC" id="2.7.1.130" evidence="1"/>
<dbReference type="EMBL" id="CP000789">
    <property type="protein sequence ID" value="ABU70506.1"/>
    <property type="molecule type" value="Genomic_DNA"/>
</dbReference>
<dbReference type="RefSeq" id="WP_012127397.1">
    <property type="nucleotide sequence ID" value="NC_009783.1"/>
</dbReference>
<dbReference type="SMR" id="A7MV09"/>
<dbReference type="KEGG" id="vha:VIBHAR_01536"/>
<dbReference type="PATRIC" id="fig|338187.25.peg.1125"/>
<dbReference type="UniPathway" id="UPA00359">
    <property type="reaction ID" value="UER00482"/>
</dbReference>
<dbReference type="Proteomes" id="UP000008152">
    <property type="component" value="Chromosome I"/>
</dbReference>
<dbReference type="GO" id="GO:0005886">
    <property type="term" value="C:plasma membrane"/>
    <property type="evidence" value="ECO:0007669"/>
    <property type="project" value="TreeGrafter"/>
</dbReference>
<dbReference type="GO" id="GO:0005524">
    <property type="term" value="F:ATP binding"/>
    <property type="evidence" value="ECO:0007669"/>
    <property type="project" value="UniProtKB-UniRule"/>
</dbReference>
<dbReference type="GO" id="GO:0009029">
    <property type="term" value="F:tetraacyldisaccharide 4'-kinase activity"/>
    <property type="evidence" value="ECO:0007669"/>
    <property type="project" value="UniProtKB-UniRule"/>
</dbReference>
<dbReference type="GO" id="GO:0009245">
    <property type="term" value="P:lipid A biosynthetic process"/>
    <property type="evidence" value="ECO:0007669"/>
    <property type="project" value="UniProtKB-UniRule"/>
</dbReference>
<dbReference type="GO" id="GO:0009244">
    <property type="term" value="P:lipopolysaccharide core region biosynthetic process"/>
    <property type="evidence" value="ECO:0007669"/>
    <property type="project" value="TreeGrafter"/>
</dbReference>
<dbReference type="HAMAP" id="MF_00409">
    <property type="entry name" value="LpxK"/>
    <property type="match status" value="1"/>
</dbReference>
<dbReference type="InterPro" id="IPR003758">
    <property type="entry name" value="LpxK"/>
</dbReference>
<dbReference type="InterPro" id="IPR027417">
    <property type="entry name" value="P-loop_NTPase"/>
</dbReference>
<dbReference type="NCBIfam" id="TIGR00682">
    <property type="entry name" value="lpxK"/>
    <property type="match status" value="1"/>
</dbReference>
<dbReference type="PANTHER" id="PTHR42724">
    <property type="entry name" value="TETRAACYLDISACCHARIDE 4'-KINASE"/>
    <property type="match status" value="1"/>
</dbReference>
<dbReference type="PANTHER" id="PTHR42724:SF1">
    <property type="entry name" value="TETRAACYLDISACCHARIDE 4'-KINASE, MITOCHONDRIAL-RELATED"/>
    <property type="match status" value="1"/>
</dbReference>
<dbReference type="Pfam" id="PF02606">
    <property type="entry name" value="LpxK"/>
    <property type="match status" value="1"/>
</dbReference>
<dbReference type="SUPFAM" id="SSF52540">
    <property type="entry name" value="P-loop containing nucleoside triphosphate hydrolases"/>
    <property type="match status" value="1"/>
</dbReference>
<name>LPXK_VIBC1</name>
<reference key="1">
    <citation type="submission" date="2007-08" db="EMBL/GenBank/DDBJ databases">
        <authorList>
            <consortium name="The Vibrio harveyi Genome Sequencing Project"/>
            <person name="Bassler B."/>
            <person name="Clifton S.W."/>
            <person name="Fulton L."/>
            <person name="Delehaunty K."/>
            <person name="Fronick C."/>
            <person name="Harrison M."/>
            <person name="Markivic C."/>
            <person name="Fulton R."/>
            <person name="Tin-Wollam A.-M."/>
            <person name="Shah N."/>
            <person name="Pepin K."/>
            <person name="Nash W."/>
            <person name="Thiruvilangam P."/>
            <person name="Bhonagiri V."/>
            <person name="Waters C."/>
            <person name="Tu K.C."/>
            <person name="Irgon J."/>
            <person name="Wilson R.K."/>
        </authorList>
    </citation>
    <scope>NUCLEOTIDE SEQUENCE [LARGE SCALE GENOMIC DNA]</scope>
    <source>
        <strain>ATCC BAA-1116 / BB120</strain>
    </source>
</reference>
<gene>
    <name evidence="1" type="primary">lpxK</name>
    <name type="ordered locus">VIBHAR_01536</name>
</gene>
<evidence type="ECO:0000255" key="1">
    <source>
        <dbReference type="HAMAP-Rule" id="MF_00409"/>
    </source>
</evidence>
<keyword id="KW-0067">ATP-binding</keyword>
<keyword id="KW-0418">Kinase</keyword>
<keyword id="KW-0441">Lipid A biosynthesis</keyword>
<keyword id="KW-0444">Lipid biosynthesis</keyword>
<keyword id="KW-0443">Lipid metabolism</keyword>
<keyword id="KW-0547">Nucleotide-binding</keyword>
<keyword id="KW-0808">Transferase</keyword>
<proteinExistence type="inferred from homology"/>
<organism>
    <name type="scientific">Vibrio campbellii (strain ATCC BAA-1116)</name>
    <dbReference type="NCBI Taxonomy" id="2902295"/>
    <lineage>
        <taxon>Bacteria</taxon>
        <taxon>Pseudomonadati</taxon>
        <taxon>Pseudomonadota</taxon>
        <taxon>Gammaproteobacteria</taxon>
        <taxon>Vibrionales</taxon>
        <taxon>Vibrionaceae</taxon>
        <taxon>Vibrio</taxon>
    </lineage>
</organism>
<accession>A7MV09</accession>
<feature type="chain" id="PRO_1000123751" description="Tetraacyldisaccharide 4'-kinase">
    <location>
        <begin position="1"/>
        <end position="335"/>
    </location>
</feature>
<feature type="binding site" evidence="1">
    <location>
        <begin position="59"/>
        <end position="66"/>
    </location>
    <ligand>
        <name>ATP</name>
        <dbReference type="ChEBI" id="CHEBI:30616"/>
    </ligand>
</feature>
<protein>
    <recommendedName>
        <fullName evidence="1">Tetraacyldisaccharide 4'-kinase</fullName>
        <ecNumber evidence="1">2.7.1.130</ecNumber>
    </recommendedName>
    <alternativeName>
        <fullName evidence="1">Lipid A 4'-kinase</fullName>
    </alternativeName>
</protein>
<comment type="function">
    <text evidence="1">Transfers the gamma-phosphate of ATP to the 4'-position of a tetraacyldisaccharide 1-phosphate intermediate (termed DS-1-P) to form tetraacyldisaccharide 1,4'-bis-phosphate (lipid IVA).</text>
</comment>
<comment type="catalytic activity">
    <reaction evidence="1">
        <text>a lipid A disaccharide + ATP = a lipid IVA + ADP + H(+)</text>
        <dbReference type="Rhea" id="RHEA:67840"/>
        <dbReference type="ChEBI" id="CHEBI:15378"/>
        <dbReference type="ChEBI" id="CHEBI:30616"/>
        <dbReference type="ChEBI" id="CHEBI:176343"/>
        <dbReference type="ChEBI" id="CHEBI:176425"/>
        <dbReference type="ChEBI" id="CHEBI:456216"/>
        <dbReference type="EC" id="2.7.1.130"/>
    </reaction>
</comment>
<comment type="pathway">
    <text evidence="1">Glycolipid biosynthesis; lipid IV(A) biosynthesis; lipid IV(A) from (3R)-3-hydroxytetradecanoyl-[acyl-carrier-protein] and UDP-N-acetyl-alpha-D-glucosamine: step 6/6.</text>
</comment>
<comment type="similarity">
    <text evidence="1">Belongs to the LpxK family.</text>
</comment>
<sequence>MVEKIWFDNHPLKYLLWPLLWPLSLLFGAISKSKRQQYQSGKKQAYKAPVPVVVVGNITAGGNGKTPVVVWLVEQLQQLGYKPGVVSRGYGAKAPQYPLVLDDNTPAKHCGDEPKLIYRRTAAPVAVDPVRANAVKALLETSVDIIITDDGLQHYALERDIEFVIVDGNRRFGNESLIPLGPLREGVERLSEVDFIITNGGQAQYGEMPMSLTPSKAINLKTKQQVEVSELRDLVAFAGIGHPPRFFNTLNAMNADVKVTKGFADHQDFDRQELQALAQQGANVIMTEKDAVKCDSYAQDNWWYLPVSAQFESNDAERILNRIKEVKATYGSPSA</sequence>